<evidence type="ECO:0000250" key="1"/>
<evidence type="ECO:0000250" key="2">
    <source>
        <dbReference type="UniProtKB" id="P00157"/>
    </source>
</evidence>
<evidence type="ECO:0000255" key="3">
    <source>
        <dbReference type="PROSITE-ProRule" id="PRU00968"/>
    </source>
</evidence>
<protein>
    <recommendedName>
        <fullName>Cytochrome b</fullName>
    </recommendedName>
    <alternativeName>
        <fullName>Complex III subunit 3</fullName>
    </alternativeName>
    <alternativeName>
        <fullName>Complex III subunit III</fullName>
    </alternativeName>
    <alternativeName>
        <fullName>Cytochrome b-c1 complex subunit 3</fullName>
    </alternativeName>
    <alternativeName>
        <fullName>Ubiquinol-cytochrome-c reductase complex cytochrome b subunit</fullName>
    </alternativeName>
</protein>
<proteinExistence type="inferred from homology"/>
<comment type="function">
    <text evidence="2">Component of the ubiquinol-cytochrome c reductase complex (complex III or cytochrome b-c1 complex) that is part of the mitochondrial respiratory chain. The b-c1 complex mediates electron transfer from ubiquinol to cytochrome c. Contributes to the generation of a proton gradient across the mitochondrial membrane that is then used for ATP synthesis.</text>
</comment>
<comment type="cofactor">
    <cofactor evidence="2">
        <name>heme b</name>
        <dbReference type="ChEBI" id="CHEBI:60344"/>
    </cofactor>
    <text evidence="2">Binds 2 heme b groups non-covalently.</text>
</comment>
<comment type="subunit">
    <text evidence="2">The cytochrome bc1 complex contains 3 respiratory subunits (MT-CYB, CYC1 and UQCRFS1), 2 core proteins (UQCRC1 and UQCRC2) and probably 6 low-molecular weight proteins.</text>
</comment>
<comment type="subcellular location">
    <subcellularLocation>
        <location evidence="2">Mitochondrion inner membrane</location>
        <topology evidence="2">Multi-pass membrane protein</topology>
    </subcellularLocation>
</comment>
<comment type="miscellaneous">
    <text evidence="1">Heme 1 (or BL or b562) is low-potential and absorbs at about 562 nm, and heme 2 (or BH or b566) is high-potential and absorbs at about 566 nm.</text>
</comment>
<comment type="similarity">
    <text evidence="3">Belongs to the cytochrome b family.</text>
</comment>
<comment type="caution">
    <text evidence="2">The full-length protein contains only eight transmembrane helices, not nine as predicted by bioinformatics tools.</text>
</comment>
<dbReference type="EMBL" id="AF039262">
    <property type="protein sequence ID" value="AAC33539.1"/>
    <property type="molecule type" value="Genomic_DNA"/>
</dbReference>
<dbReference type="EMBL" id="U96015">
    <property type="protein sequence ID" value="AAC24731.1"/>
    <property type="molecule type" value="Genomic_DNA"/>
</dbReference>
<dbReference type="EMBL" id="U96019">
    <property type="protein sequence ID" value="AAC24735.1"/>
    <property type="molecule type" value="Genomic_DNA"/>
</dbReference>
<dbReference type="EMBL" id="U96020">
    <property type="protein sequence ID" value="AAC24736.1"/>
    <property type="molecule type" value="Genomic_DNA"/>
</dbReference>
<dbReference type="EMBL" id="U96021">
    <property type="protein sequence ID" value="AAC24737.1"/>
    <property type="molecule type" value="Genomic_DNA"/>
</dbReference>
<dbReference type="SMR" id="P92853"/>
<dbReference type="GO" id="GO:0005743">
    <property type="term" value="C:mitochondrial inner membrane"/>
    <property type="evidence" value="ECO:0007669"/>
    <property type="project" value="UniProtKB-SubCell"/>
</dbReference>
<dbReference type="GO" id="GO:0046872">
    <property type="term" value="F:metal ion binding"/>
    <property type="evidence" value="ECO:0007669"/>
    <property type="project" value="UniProtKB-KW"/>
</dbReference>
<dbReference type="GO" id="GO:0008121">
    <property type="term" value="F:ubiquinol-cytochrome-c reductase activity"/>
    <property type="evidence" value="ECO:0007669"/>
    <property type="project" value="TreeGrafter"/>
</dbReference>
<dbReference type="GO" id="GO:0006122">
    <property type="term" value="P:mitochondrial electron transport, ubiquinol to cytochrome c"/>
    <property type="evidence" value="ECO:0007669"/>
    <property type="project" value="TreeGrafter"/>
</dbReference>
<dbReference type="CDD" id="cd00284">
    <property type="entry name" value="Cytochrome_b_N"/>
    <property type="match status" value="1"/>
</dbReference>
<dbReference type="Gene3D" id="1.20.810.10">
    <property type="entry name" value="Cytochrome Bc1 Complex, Chain C"/>
    <property type="match status" value="1"/>
</dbReference>
<dbReference type="InterPro" id="IPR005797">
    <property type="entry name" value="Cyt_b/b6_N"/>
</dbReference>
<dbReference type="InterPro" id="IPR027387">
    <property type="entry name" value="Cytb/b6-like_sf"/>
</dbReference>
<dbReference type="InterPro" id="IPR048259">
    <property type="entry name" value="Cytochrome_b_N_euk/bac"/>
</dbReference>
<dbReference type="InterPro" id="IPR016174">
    <property type="entry name" value="Di-haem_cyt_TM"/>
</dbReference>
<dbReference type="PANTHER" id="PTHR19271">
    <property type="entry name" value="CYTOCHROME B"/>
    <property type="match status" value="1"/>
</dbReference>
<dbReference type="PANTHER" id="PTHR19271:SF16">
    <property type="entry name" value="CYTOCHROME B"/>
    <property type="match status" value="1"/>
</dbReference>
<dbReference type="Pfam" id="PF00033">
    <property type="entry name" value="Cytochrome_B"/>
    <property type="match status" value="1"/>
</dbReference>
<dbReference type="SUPFAM" id="SSF81342">
    <property type="entry name" value="Transmembrane di-heme cytochromes"/>
    <property type="match status" value="1"/>
</dbReference>
<dbReference type="PROSITE" id="PS51002">
    <property type="entry name" value="CYTB_NTER"/>
    <property type="match status" value="1"/>
</dbReference>
<organism>
    <name type="scientific">Lachesis muta muta</name>
    <name type="common">Bushmaster</name>
    <dbReference type="NCBI Taxonomy" id="8753"/>
    <lineage>
        <taxon>Eukaryota</taxon>
        <taxon>Metazoa</taxon>
        <taxon>Chordata</taxon>
        <taxon>Craniata</taxon>
        <taxon>Vertebrata</taxon>
        <taxon>Euteleostomi</taxon>
        <taxon>Lepidosauria</taxon>
        <taxon>Squamata</taxon>
        <taxon>Bifurcata</taxon>
        <taxon>Unidentata</taxon>
        <taxon>Episquamata</taxon>
        <taxon>Toxicofera</taxon>
        <taxon>Serpentes</taxon>
        <taxon>Colubroidea</taxon>
        <taxon>Viperidae</taxon>
        <taxon>Crotalinae</taxon>
        <taxon>Lachesis</taxon>
    </lineage>
</organism>
<sequence length="214" mass="24197">YINYKNMLHQHMLTLFNLLPVGSNISTWWNFGSMLLICLMIQTTTGFFLAIHYTANINLAFSSIMHISRDVPYGWIMQNTHAIGASLFFICIYTHIARGIYYGSYLNKEVWLSGTTLLIILMATAFFGYVLPWGQMSFWAATVITNLLTAIPYLGNTLTTWLWGGFAINDPTLTRFFALHFILPFAIISLSSIHILLLHNEGSNNPLGTNSDID</sequence>
<reference key="1">
    <citation type="journal article" date="1998" name="Mol. Phylogenet. Evol.">
        <title>Weighting and congruence: a case study based on three mitochondrial genes in pitvipers.</title>
        <authorList>
            <person name="Vidal N."/>
            <person name="Lecointre G."/>
        </authorList>
    </citation>
    <scope>NUCLEOTIDE SEQUENCE [GENOMIC DNA]</scope>
</reference>
<reference key="2">
    <citation type="journal article" date="1997" name="C. R. Acad. Sci. III, Sci. Vie">
        <title>Molecular systematics of pitvipers: paraphyly of the Bothrops complex.</title>
        <authorList>
            <person name="Vidal N."/>
            <person name="Lecointre G."/>
            <person name="Vie J.-C."/>
            <person name="Gasc J.-P."/>
        </authorList>
    </citation>
    <scope>NUCLEOTIDE SEQUENCE [GENOMIC DNA] OF 1-132</scope>
</reference>
<reference key="3">
    <citation type="journal article" date="1997" name="Biol. J. Linn. Soc. Lond.">
        <title>Phylogeography of the bushmaster (Lachesis muta: viperidae): implications for neotropical biogeography, systematics, and conservation.</title>
        <authorList>
            <person name="Zamudio K.R."/>
            <person name="Greene H.W."/>
        </authorList>
    </citation>
    <scope>NUCLEOTIDE SEQUENCE [GENOMIC DNA] OF 23-114</scope>
</reference>
<keyword id="KW-0249">Electron transport</keyword>
<keyword id="KW-0349">Heme</keyword>
<keyword id="KW-0408">Iron</keyword>
<keyword id="KW-0472">Membrane</keyword>
<keyword id="KW-0479">Metal-binding</keyword>
<keyword id="KW-0496">Mitochondrion</keyword>
<keyword id="KW-0999">Mitochondrion inner membrane</keyword>
<keyword id="KW-0679">Respiratory chain</keyword>
<keyword id="KW-0812">Transmembrane</keyword>
<keyword id="KW-1133">Transmembrane helix</keyword>
<keyword id="KW-0813">Transport</keyword>
<keyword id="KW-0830">Ubiquinone</keyword>
<name>CYB_LACMU</name>
<gene>
    <name type="primary">MT-CYB</name>
    <name type="synonym">COB</name>
    <name type="synonym">CYTB</name>
    <name type="synonym">MTCYB</name>
</gene>
<geneLocation type="mitochondrion"/>
<accession>P92853</accession>
<accession>Q53WU9</accession>
<feature type="chain" id="PRO_0000061075" description="Cytochrome b">
    <location>
        <begin position="1" status="less than"/>
        <end position="214" status="greater than"/>
    </location>
</feature>
<feature type="transmembrane region" description="Helical" evidence="3">
    <location>
        <begin position="31"/>
        <end position="51"/>
    </location>
</feature>
<feature type="transmembrane region" description="Helical" evidence="2">
    <location>
        <begin position="75"/>
        <end position="96"/>
    </location>
</feature>
<feature type="transmembrane region" description="Helical" evidence="2">
    <location>
        <begin position="111"/>
        <end position="131"/>
    </location>
</feature>
<feature type="transmembrane region" description="Helical" evidence="3">
    <location>
        <begin position="176"/>
        <end position="196"/>
    </location>
</feature>
<feature type="binding site" description="axial binding residue" evidence="2">
    <location>
        <position position="81"/>
    </location>
    <ligand>
        <name>heme b</name>
        <dbReference type="ChEBI" id="CHEBI:60344"/>
        <label>b562</label>
    </ligand>
    <ligandPart>
        <name>Fe</name>
        <dbReference type="ChEBI" id="CHEBI:18248"/>
    </ligandPart>
</feature>
<feature type="binding site" description="axial binding residue" evidence="2">
    <location>
        <position position="95"/>
    </location>
    <ligand>
        <name>heme b</name>
        <dbReference type="ChEBI" id="CHEBI:60344"/>
        <label>b566</label>
    </ligand>
    <ligandPart>
        <name>Fe</name>
        <dbReference type="ChEBI" id="CHEBI:18248"/>
    </ligandPart>
</feature>
<feature type="binding site" description="axial binding residue" evidence="2">
    <location>
        <position position="180"/>
    </location>
    <ligand>
        <name>heme b</name>
        <dbReference type="ChEBI" id="CHEBI:60344"/>
        <label>b562</label>
    </ligand>
    <ligandPart>
        <name>Fe</name>
        <dbReference type="ChEBI" id="CHEBI:18248"/>
    </ligandPart>
</feature>
<feature type="binding site" description="axial binding residue" evidence="2">
    <location>
        <position position="194"/>
    </location>
    <ligand>
        <name>heme b</name>
        <dbReference type="ChEBI" id="CHEBI:60344"/>
        <label>b566</label>
    </ligand>
    <ligandPart>
        <name>Fe</name>
        <dbReference type="ChEBI" id="CHEBI:18248"/>
    </ligandPart>
</feature>
<feature type="binding site" evidence="2">
    <location>
        <position position="199"/>
    </location>
    <ligand>
        <name>a ubiquinone</name>
        <dbReference type="ChEBI" id="CHEBI:16389"/>
    </ligand>
</feature>
<feature type="non-terminal residue">
    <location>
        <position position="1"/>
    </location>
</feature>
<feature type="non-terminal residue">
    <location>
        <position position="214"/>
    </location>
</feature>